<protein>
    <recommendedName>
        <fullName evidence="1">Pantothenate synthetase</fullName>
        <shortName evidence="1">PS</shortName>
        <ecNumber evidence="1">6.3.2.1</ecNumber>
    </recommendedName>
    <alternativeName>
        <fullName evidence="1">Pantoate--beta-alanine ligase</fullName>
    </alternativeName>
    <alternativeName>
        <fullName evidence="1">Pantoate-activating enzyme</fullName>
    </alternativeName>
</protein>
<keyword id="KW-0067">ATP-binding</keyword>
<keyword id="KW-0963">Cytoplasm</keyword>
<keyword id="KW-0436">Ligase</keyword>
<keyword id="KW-0547">Nucleotide-binding</keyword>
<keyword id="KW-0566">Pantothenate biosynthesis</keyword>
<keyword id="KW-1185">Reference proteome</keyword>
<gene>
    <name evidence="1" type="primary">panC</name>
    <name type="ordered locus">SSP0155</name>
</gene>
<sequence length="282" mass="31730">MTQLITTIEEMRSIIANLHNQRRSVGFIPTMGALHDGHLKMMSLSLNENDVTIISIFVNPLQFGPNEDLDSYPRDIVGDTAKAESVGVDYIFHPTVKEMYPELPTIELKAGRLASVLEGAERPGHFDGVVTVVNKLFNIVRPHKAYFGKKDAQQLAIVEKMVEDFNHPIEIKGVDIVREDDGLAKSSRNIYLTKNERIEAVHLYKSLCLAQSLYKNGERNSEKIIKATRDYLTEHTSGTIETVAIYSYPELVEQTQIKDSIFISLAVKFSKARLIDNIIIEG</sequence>
<name>PANC_STAS1</name>
<reference key="1">
    <citation type="journal article" date="2005" name="Proc. Natl. Acad. Sci. U.S.A.">
        <title>Whole genome sequence of Staphylococcus saprophyticus reveals the pathogenesis of uncomplicated urinary tract infection.</title>
        <authorList>
            <person name="Kuroda M."/>
            <person name="Yamashita A."/>
            <person name="Hirakawa H."/>
            <person name="Kumano M."/>
            <person name="Morikawa K."/>
            <person name="Higashide M."/>
            <person name="Maruyama A."/>
            <person name="Inose Y."/>
            <person name="Matoba K."/>
            <person name="Toh H."/>
            <person name="Kuhara S."/>
            <person name="Hattori M."/>
            <person name="Ohta T."/>
        </authorList>
    </citation>
    <scope>NUCLEOTIDE SEQUENCE [LARGE SCALE GENOMIC DNA]</scope>
    <source>
        <strain>ATCC 15305 / DSM 20229 / NCIMB 8711 / NCTC 7292 / S-41</strain>
    </source>
</reference>
<evidence type="ECO:0000255" key="1">
    <source>
        <dbReference type="HAMAP-Rule" id="MF_00158"/>
    </source>
</evidence>
<comment type="function">
    <text evidence="1">Catalyzes the condensation of pantoate with beta-alanine in an ATP-dependent reaction via a pantoyl-adenylate intermediate.</text>
</comment>
<comment type="catalytic activity">
    <reaction evidence="1">
        <text>(R)-pantoate + beta-alanine + ATP = (R)-pantothenate + AMP + diphosphate + H(+)</text>
        <dbReference type="Rhea" id="RHEA:10912"/>
        <dbReference type="ChEBI" id="CHEBI:15378"/>
        <dbReference type="ChEBI" id="CHEBI:15980"/>
        <dbReference type="ChEBI" id="CHEBI:29032"/>
        <dbReference type="ChEBI" id="CHEBI:30616"/>
        <dbReference type="ChEBI" id="CHEBI:33019"/>
        <dbReference type="ChEBI" id="CHEBI:57966"/>
        <dbReference type="ChEBI" id="CHEBI:456215"/>
        <dbReference type="EC" id="6.3.2.1"/>
    </reaction>
</comment>
<comment type="pathway">
    <text evidence="1">Cofactor biosynthesis; (R)-pantothenate biosynthesis; (R)-pantothenate from (R)-pantoate and beta-alanine: step 1/1.</text>
</comment>
<comment type="subunit">
    <text evidence="1">Homodimer.</text>
</comment>
<comment type="subcellular location">
    <subcellularLocation>
        <location evidence="1">Cytoplasm</location>
    </subcellularLocation>
</comment>
<comment type="miscellaneous">
    <text evidence="1">The reaction proceeds by a bi uni uni bi ping pong mechanism.</text>
</comment>
<comment type="similarity">
    <text evidence="1">Belongs to the pantothenate synthetase family.</text>
</comment>
<dbReference type="EC" id="6.3.2.1" evidence="1"/>
<dbReference type="EMBL" id="AP008934">
    <property type="protein sequence ID" value="BAE17300.1"/>
    <property type="molecule type" value="Genomic_DNA"/>
</dbReference>
<dbReference type="RefSeq" id="WP_011302153.1">
    <property type="nucleotide sequence ID" value="NZ_MTGA01000037.1"/>
</dbReference>
<dbReference type="SMR" id="Q4A0T9"/>
<dbReference type="GeneID" id="3615011"/>
<dbReference type="KEGG" id="ssp:SSP0155"/>
<dbReference type="PATRIC" id="fig|342451.11.peg.160"/>
<dbReference type="eggNOG" id="COG0414">
    <property type="taxonomic scope" value="Bacteria"/>
</dbReference>
<dbReference type="HOGENOM" id="CLU_047148_0_0_9"/>
<dbReference type="OrthoDB" id="9773087at2"/>
<dbReference type="UniPathway" id="UPA00028">
    <property type="reaction ID" value="UER00005"/>
</dbReference>
<dbReference type="Proteomes" id="UP000006371">
    <property type="component" value="Chromosome"/>
</dbReference>
<dbReference type="GO" id="GO:0005829">
    <property type="term" value="C:cytosol"/>
    <property type="evidence" value="ECO:0007669"/>
    <property type="project" value="TreeGrafter"/>
</dbReference>
<dbReference type="GO" id="GO:0005524">
    <property type="term" value="F:ATP binding"/>
    <property type="evidence" value="ECO:0007669"/>
    <property type="project" value="UniProtKB-KW"/>
</dbReference>
<dbReference type="GO" id="GO:0004592">
    <property type="term" value="F:pantoate-beta-alanine ligase activity"/>
    <property type="evidence" value="ECO:0007669"/>
    <property type="project" value="UniProtKB-UniRule"/>
</dbReference>
<dbReference type="GO" id="GO:0015940">
    <property type="term" value="P:pantothenate biosynthetic process"/>
    <property type="evidence" value="ECO:0007669"/>
    <property type="project" value="UniProtKB-UniRule"/>
</dbReference>
<dbReference type="CDD" id="cd00560">
    <property type="entry name" value="PanC"/>
    <property type="match status" value="1"/>
</dbReference>
<dbReference type="FunFam" id="3.30.1300.10:FF:000001">
    <property type="entry name" value="Pantothenate synthetase"/>
    <property type="match status" value="1"/>
</dbReference>
<dbReference type="FunFam" id="3.40.50.620:FF:000013">
    <property type="entry name" value="Pantothenate synthetase"/>
    <property type="match status" value="1"/>
</dbReference>
<dbReference type="Gene3D" id="3.40.50.620">
    <property type="entry name" value="HUPs"/>
    <property type="match status" value="1"/>
</dbReference>
<dbReference type="Gene3D" id="3.30.1300.10">
    <property type="entry name" value="Pantoate-beta-alanine ligase, C-terminal domain"/>
    <property type="match status" value="1"/>
</dbReference>
<dbReference type="HAMAP" id="MF_00158">
    <property type="entry name" value="PanC"/>
    <property type="match status" value="1"/>
</dbReference>
<dbReference type="InterPro" id="IPR003721">
    <property type="entry name" value="Pantoate_ligase"/>
</dbReference>
<dbReference type="InterPro" id="IPR042176">
    <property type="entry name" value="Pantoate_ligase_C"/>
</dbReference>
<dbReference type="InterPro" id="IPR014729">
    <property type="entry name" value="Rossmann-like_a/b/a_fold"/>
</dbReference>
<dbReference type="NCBIfam" id="TIGR00018">
    <property type="entry name" value="panC"/>
    <property type="match status" value="1"/>
</dbReference>
<dbReference type="PANTHER" id="PTHR21299">
    <property type="entry name" value="CYTIDYLATE KINASE/PANTOATE-BETA-ALANINE LIGASE"/>
    <property type="match status" value="1"/>
</dbReference>
<dbReference type="PANTHER" id="PTHR21299:SF1">
    <property type="entry name" value="PANTOATE--BETA-ALANINE LIGASE"/>
    <property type="match status" value="1"/>
</dbReference>
<dbReference type="Pfam" id="PF02569">
    <property type="entry name" value="Pantoate_ligase"/>
    <property type="match status" value="1"/>
</dbReference>
<dbReference type="SUPFAM" id="SSF52374">
    <property type="entry name" value="Nucleotidylyl transferase"/>
    <property type="match status" value="1"/>
</dbReference>
<accession>Q4A0T9</accession>
<feature type="chain" id="PRO_0000305562" description="Pantothenate synthetase">
    <location>
        <begin position="1"/>
        <end position="282"/>
    </location>
</feature>
<feature type="active site" description="Proton donor" evidence="1">
    <location>
        <position position="38"/>
    </location>
</feature>
<feature type="binding site" evidence="1">
    <location>
        <begin position="31"/>
        <end position="38"/>
    </location>
    <ligand>
        <name>ATP</name>
        <dbReference type="ChEBI" id="CHEBI:30616"/>
    </ligand>
</feature>
<feature type="binding site" evidence="1">
    <location>
        <position position="62"/>
    </location>
    <ligand>
        <name>(R)-pantoate</name>
        <dbReference type="ChEBI" id="CHEBI:15980"/>
    </ligand>
</feature>
<feature type="binding site" evidence="1">
    <location>
        <position position="62"/>
    </location>
    <ligand>
        <name>beta-alanine</name>
        <dbReference type="ChEBI" id="CHEBI:57966"/>
    </ligand>
</feature>
<feature type="binding site" evidence="1">
    <location>
        <begin position="148"/>
        <end position="151"/>
    </location>
    <ligand>
        <name>ATP</name>
        <dbReference type="ChEBI" id="CHEBI:30616"/>
    </ligand>
</feature>
<feature type="binding site" evidence="1">
    <location>
        <position position="154"/>
    </location>
    <ligand>
        <name>(R)-pantoate</name>
        <dbReference type="ChEBI" id="CHEBI:15980"/>
    </ligand>
</feature>
<feature type="binding site" evidence="1">
    <location>
        <position position="177"/>
    </location>
    <ligand>
        <name>ATP</name>
        <dbReference type="ChEBI" id="CHEBI:30616"/>
    </ligand>
</feature>
<feature type="binding site" evidence="1">
    <location>
        <begin position="185"/>
        <end position="188"/>
    </location>
    <ligand>
        <name>ATP</name>
        <dbReference type="ChEBI" id="CHEBI:30616"/>
    </ligand>
</feature>
<proteinExistence type="inferred from homology"/>
<organism>
    <name type="scientific">Staphylococcus saprophyticus subsp. saprophyticus (strain ATCC 15305 / DSM 20229 / NCIMB 8711 / NCTC 7292 / S-41)</name>
    <dbReference type="NCBI Taxonomy" id="342451"/>
    <lineage>
        <taxon>Bacteria</taxon>
        <taxon>Bacillati</taxon>
        <taxon>Bacillota</taxon>
        <taxon>Bacilli</taxon>
        <taxon>Bacillales</taxon>
        <taxon>Staphylococcaceae</taxon>
        <taxon>Staphylococcus</taxon>
    </lineage>
</organism>